<sequence>MNIQQIVEQLKQNEVVAYPTEAVFGLGCNPNSESAVQKLLVLKQRSVEKGLILVAPCLDYFLPFIDTTAFSQADWDRLQAKYDRPTTWVVPAKTTTPKFLTGQFDSIAVRLCDHPAVKQLCEQAGFALTSTSANLTTLPPCRTAEEVKTQFGADFPVLDLPVGEATNPSEIRDLFTHQLFRQG</sequence>
<protein>
    <recommendedName>
        <fullName evidence="1">Threonylcarbamoyl-AMP synthase</fullName>
        <shortName evidence="1">TC-AMP synthase</shortName>
        <ecNumber evidence="1">2.7.7.87</ecNumber>
    </recommendedName>
    <alternativeName>
        <fullName evidence="1">L-threonylcarbamoyladenylate synthase</fullName>
    </alternativeName>
    <alternativeName>
        <fullName evidence="1">t(6)A37 threonylcarbamoyladenosine biosynthesis protein TsaC</fullName>
    </alternativeName>
    <alternativeName>
        <fullName evidence="1">tRNA threonylcarbamoyladenosine biosynthesis protein TsaC</fullName>
    </alternativeName>
</protein>
<dbReference type="EC" id="2.7.7.87" evidence="1"/>
<dbReference type="EMBL" id="AE004439">
    <property type="protein sequence ID" value="AAK03354.1"/>
    <property type="molecule type" value="Genomic_DNA"/>
</dbReference>
<dbReference type="RefSeq" id="WP_010907103.1">
    <property type="nucleotide sequence ID" value="NC_002663.1"/>
</dbReference>
<dbReference type="SMR" id="Q9CLG4"/>
<dbReference type="STRING" id="272843.PM1270"/>
<dbReference type="EnsemblBacteria" id="AAK03354">
    <property type="protein sequence ID" value="AAK03354"/>
    <property type="gene ID" value="PM1270"/>
</dbReference>
<dbReference type="KEGG" id="pmu:PM1270"/>
<dbReference type="PATRIC" id="fig|272843.6.peg.1281"/>
<dbReference type="HOGENOM" id="CLU_031397_6_0_6"/>
<dbReference type="OrthoDB" id="9814580at2"/>
<dbReference type="Proteomes" id="UP000000809">
    <property type="component" value="Chromosome"/>
</dbReference>
<dbReference type="GO" id="GO:0005737">
    <property type="term" value="C:cytoplasm"/>
    <property type="evidence" value="ECO:0007669"/>
    <property type="project" value="UniProtKB-SubCell"/>
</dbReference>
<dbReference type="GO" id="GO:0005524">
    <property type="term" value="F:ATP binding"/>
    <property type="evidence" value="ECO:0007669"/>
    <property type="project" value="UniProtKB-UniRule"/>
</dbReference>
<dbReference type="GO" id="GO:0003725">
    <property type="term" value="F:double-stranded RNA binding"/>
    <property type="evidence" value="ECO:0007669"/>
    <property type="project" value="InterPro"/>
</dbReference>
<dbReference type="GO" id="GO:0061710">
    <property type="term" value="F:L-threonylcarbamoyladenylate synthase"/>
    <property type="evidence" value="ECO:0007669"/>
    <property type="project" value="UniProtKB-EC"/>
</dbReference>
<dbReference type="GO" id="GO:0000049">
    <property type="term" value="F:tRNA binding"/>
    <property type="evidence" value="ECO:0007669"/>
    <property type="project" value="TreeGrafter"/>
</dbReference>
<dbReference type="GO" id="GO:0006450">
    <property type="term" value="P:regulation of translational fidelity"/>
    <property type="evidence" value="ECO:0007669"/>
    <property type="project" value="TreeGrafter"/>
</dbReference>
<dbReference type="GO" id="GO:0002949">
    <property type="term" value="P:tRNA threonylcarbamoyladenosine modification"/>
    <property type="evidence" value="ECO:0007669"/>
    <property type="project" value="UniProtKB-UniRule"/>
</dbReference>
<dbReference type="FunFam" id="3.90.870.10:FF:000004">
    <property type="entry name" value="Threonylcarbamoyl-AMP synthase"/>
    <property type="match status" value="1"/>
</dbReference>
<dbReference type="Gene3D" id="3.90.870.10">
    <property type="entry name" value="DHBP synthase"/>
    <property type="match status" value="1"/>
</dbReference>
<dbReference type="HAMAP" id="MF_01852">
    <property type="entry name" value="TsaC"/>
    <property type="match status" value="1"/>
</dbReference>
<dbReference type="InterPro" id="IPR017945">
    <property type="entry name" value="DHBP_synth_RibB-like_a/b_dom"/>
</dbReference>
<dbReference type="InterPro" id="IPR006070">
    <property type="entry name" value="Sua5-like_dom"/>
</dbReference>
<dbReference type="InterPro" id="IPR023535">
    <property type="entry name" value="TC-AMP_synthase"/>
</dbReference>
<dbReference type="InterPro" id="IPR050156">
    <property type="entry name" value="TC-AMP_synthase_SUA5"/>
</dbReference>
<dbReference type="PANTHER" id="PTHR17490">
    <property type="entry name" value="SUA5"/>
    <property type="match status" value="1"/>
</dbReference>
<dbReference type="PANTHER" id="PTHR17490:SF18">
    <property type="entry name" value="THREONYLCARBAMOYL-AMP SYNTHASE"/>
    <property type="match status" value="1"/>
</dbReference>
<dbReference type="Pfam" id="PF01300">
    <property type="entry name" value="Sua5_yciO_yrdC"/>
    <property type="match status" value="1"/>
</dbReference>
<dbReference type="SUPFAM" id="SSF55821">
    <property type="entry name" value="YrdC/RibB"/>
    <property type="match status" value="1"/>
</dbReference>
<dbReference type="PROSITE" id="PS51163">
    <property type="entry name" value="YRDC"/>
    <property type="match status" value="1"/>
</dbReference>
<organism>
    <name type="scientific">Pasteurella multocida (strain Pm70)</name>
    <dbReference type="NCBI Taxonomy" id="272843"/>
    <lineage>
        <taxon>Bacteria</taxon>
        <taxon>Pseudomonadati</taxon>
        <taxon>Pseudomonadota</taxon>
        <taxon>Gammaproteobacteria</taxon>
        <taxon>Pasteurellales</taxon>
        <taxon>Pasteurellaceae</taxon>
        <taxon>Pasteurella</taxon>
    </lineage>
</organism>
<name>TSAC_PASMU</name>
<proteinExistence type="inferred from homology"/>
<evidence type="ECO:0000255" key="1">
    <source>
        <dbReference type="HAMAP-Rule" id="MF_01852"/>
    </source>
</evidence>
<comment type="function">
    <text evidence="1">Required for the formation of a threonylcarbamoyl group on adenosine at position 37 (t(6)A37) in tRNAs that read codons beginning with adenine. Catalyzes the conversion of L-threonine, HCO(3)(-)/CO(2) and ATP to give threonylcarbamoyl-AMP (TC-AMP) as the acyladenylate intermediate, with the release of diphosphate.</text>
</comment>
<comment type="catalytic activity">
    <reaction evidence="1">
        <text>L-threonine + hydrogencarbonate + ATP = L-threonylcarbamoyladenylate + diphosphate + H2O</text>
        <dbReference type="Rhea" id="RHEA:36407"/>
        <dbReference type="ChEBI" id="CHEBI:15377"/>
        <dbReference type="ChEBI" id="CHEBI:17544"/>
        <dbReference type="ChEBI" id="CHEBI:30616"/>
        <dbReference type="ChEBI" id="CHEBI:33019"/>
        <dbReference type="ChEBI" id="CHEBI:57926"/>
        <dbReference type="ChEBI" id="CHEBI:73682"/>
        <dbReference type="EC" id="2.7.7.87"/>
    </reaction>
</comment>
<comment type="subcellular location">
    <subcellularLocation>
        <location evidence="1">Cytoplasm</location>
    </subcellularLocation>
</comment>
<comment type="similarity">
    <text evidence="1">Belongs to the SUA5 family. TsaC subfamily.</text>
</comment>
<feature type="chain" id="PRO_0000352943" description="Threonylcarbamoyl-AMP synthase">
    <location>
        <begin position="1"/>
        <end position="183"/>
    </location>
</feature>
<feature type="domain" description="YrdC-like" evidence="1">
    <location>
        <begin position="1"/>
        <end position="183"/>
    </location>
</feature>
<gene>
    <name evidence="1" type="primary">tsaC</name>
    <name type="synonym">rimN</name>
    <name type="ordered locus">PM1270</name>
</gene>
<reference key="1">
    <citation type="journal article" date="2001" name="Proc. Natl. Acad. Sci. U.S.A.">
        <title>Complete genomic sequence of Pasteurella multocida Pm70.</title>
        <authorList>
            <person name="May B.J."/>
            <person name="Zhang Q."/>
            <person name="Li L.L."/>
            <person name="Paustian M.L."/>
            <person name="Whittam T.S."/>
            <person name="Kapur V."/>
        </authorList>
    </citation>
    <scope>NUCLEOTIDE SEQUENCE [LARGE SCALE GENOMIC DNA]</scope>
    <source>
        <strain>Pm70</strain>
    </source>
</reference>
<keyword id="KW-0067">ATP-binding</keyword>
<keyword id="KW-0963">Cytoplasm</keyword>
<keyword id="KW-0547">Nucleotide-binding</keyword>
<keyword id="KW-0548">Nucleotidyltransferase</keyword>
<keyword id="KW-1185">Reference proteome</keyword>
<keyword id="KW-0808">Transferase</keyword>
<keyword id="KW-0819">tRNA processing</keyword>
<accession>Q9CLG4</accession>